<sequence length="59" mass="7014">MKKTAKHFCPHCQKEVSWQDNPHRPFCSERCKMIDLGSWFSENYKIPGEKKPSEDEDDN</sequence>
<organism>
    <name type="scientific">Geotalea daltonii (strain DSM 22248 / JCM 15807 / FRC-32)</name>
    <name type="common">Geobacter daltonii</name>
    <dbReference type="NCBI Taxonomy" id="316067"/>
    <lineage>
        <taxon>Bacteria</taxon>
        <taxon>Pseudomonadati</taxon>
        <taxon>Thermodesulfobacteriota</taxon>
        <taxon>Desulfuromonadia</taxon>
        <taxon>Geobacterales</taxon>
        <taxon>Geobacteraceae</taxon>
        <taxon>Geotalea</taxon>
    </lineage>
</organism>
<accession>B9M2R9</accession>
<gene>
    <name evidence="1" type="primary">yacG</name>
    <name type="ordered locus">Geob_2922</name>
</gene>
<comment type="function">
    <text evidence="1">Inhibits all the catalytic activities of DNA gyrase by preventing its interaction with DNA. Acts by binding directly to the C-terminal domain of GyrB, which probably disrupts DNA binding by the gyrase.</text>
</comment>
<comment type="cofactor">
    <cofactor evidence="1">
        <name>Zn(2+)</name>
        <dbReference type="ChEBI" id="CHEBI:29105"/>
    </cofactor>
    <text evidence="1">Binds 1 zinc ion.</text>
</comment>
<comment type="subunit">
    <text evidence="1">Interacts with GyrB.</text>
</comment>
<comment type="similarity">
    <text evidence="1">Belongs to the DNA gyrase inhibitor YacG family.</text>
</comment>
<keyword id="KW-0479">Metal-binding</keyword>
<keyword id="KW-1185">Reference proteome</keyword>
<keyword id="KW-0862">Zinc</keyword>
<protein>
    <recommendedName>
        <fullName evidence="1">DNA gyrase inhibitor YacG</fullName>
    </recommendedName>
</protein>
<proteinExistence type="inferred from homology"/>
<dbReference type="EMBL" id="CP001390">
    <property type="protein sequence ID" value="ACM21265.1"/>
    <property type="molecule type" value="Genomic_DNA"/>
</dbReference>
<dbReference type="RefSeq" id="WP_012647993.1">
    <property type="nucleotide sequence ID" value="NC_011979.1"/>
</dbReference>
<dbReference type="SMR" id="B9M2R9"/>
<dbReference type="STRING" id="316067.Geob_2922"/>
<dbReference type="KEGG" id="geo:Geob_2922"/>
<dbReference type="eggNOG" id="COG3024">
    <property type="taxonomic scope" value="Bacteria"/>
</dbReference>
<dbReference type="HOGENOM" id="CLU_178280_3_2_7"/>
<dbReference type="OrthoDB" id="9809663at2"/>
<dbReference type="Proteomes" id="UP000007721">
    <property type="component" value="Chromosome"/>
</dbReference>
<dbReference type="GO" id="GO:0008270">
    <property type="term" value="F:zinc ion binding"/>
    <property type="evidence" value="ECO:0007669"/>
    <property type="project" value="InterPro"/>
</dbReference>
<dbReference type="GO" id="GO:0006355">
    <property type="term" value="P:regulation of DNA-templated transcription"/>
    <property type="evidence" value="ECO:0007669"/>
    <property type="project" value="InterPro"/>
</dbReference>
<dbReference type="Gene3D" id="3.30.50.10">
    <property type="entry name" value="Erythroid Transcription Factor GATA-1, subunit A"/>
    <property type="match status" value="1"/>
</dbReference>
<dbReference type="HAMAP" id="MF_00649">
    <property type="entry name" value="DNA_gyrase_inhibitor_YacG"/>
    <property type="match status" value="1"/>
</dbReference>
<dbReference type="InterPro" id="IPR005584">
    <property type="entry name" value="DNA_gyrase_inhibitor_YacG"/>
</dbReference>
<dbReference type="InterPro" id="IPR013088">
    <property type="entry name" value="Znf_NHR/GATA"/>
</dbReference>
<dbReference type="PANTHER" id="PTHR36150">
    <property type="entry name" value="DNA GYRASE INHIBITOR YACG"/>
    <property type="match status" value="1"/>
</dbReference>
<dbReference type="PANTHER" id="PTHR36150:SF1">
    <property type="entry name" value="DNA GYRASE INHIBITOR YACG"/>
    <property type="match status" value="1"/>
</dbReference>
<dbReference type="Pfam" id="PF03884">
    <property type="entry name" value="YacG"/>
    <property type="match status" value="1"/>
</dbReference>
<dbReference type="SUPFAM" id="SSF57716">
    <property type="entry name" value="Glucocorticoid receptor-like (DNA-binding domain)"/>
    <property type="match status" value="1"/>
</dbReference>
<evidence type="ECO:0000255" key="1">
    <source>
        <dbReference type="HAMAP-Rule" id="MF_00649"/>
    </source>
</evidence>
<reference key="1">
    <citation type="submission" date="2009-01" db="EMBL/GenBank/DDBJ databases">
        <title>Complete sequence of Geobacter sp. FRC-32.</title>
        <authorList>
            <consortium name="US DOE Joint Genome Institute"/>
            <person name="Lucas S."/>
            <person name="Copeland A."/>
            <person name="Lapidus A."/>
            <person name="Glavina del Rio T."/>
            <person name="Dalin E."/>
            <person name="Tice H."/>
            <person name="Bruce D."/>
            <person name="Goodwin L."/>
            <person name="Pitluck S."/>
            <person name="Saunders E."/>
            <person name="Brettin T."/>
            <person name="Detter J.C."/>
            <person name="Han C."/>
            <person name="Larimer F."/>
            <person name="Land M."/>
            <person name="Hauser L."/>
            <person name="Kyrpides N."/>
            <person name="Ovchinnikova G."/>
            <person name="Kostka J."/>
            <person name="Richardson P."/>
        </authorList>
    </citation>
    <scope>NUCLEOTIDE SEQUENCE [LARGE SCALE GENOMIC DNA]</scope>
    <source>
        <strain>DSM 22248 / JCM 15807 / FRC-32</strain>
    </source>
</reference>
<name>YACG_GEODF</name>
<feature type="chain" id="PRO_1000200406" description="DNA gyrase inhibitor YacG">
    <location>
        <begin position="1"/>
        <end position="59"/>
    </location>
</feature>
<feature type="binding site" evidence="1">
    <location>
        <position position="9"/>
    </location>
    <ligand>
        <name>Zn(2+)</name>
        <dbReference type="ChEBI" id="CHEBI:29105"/>
    </ligand>
</feature>
<feature type="binding site" evidence="1">
    <location>
        <position position="12"/>
    </location>
    <ligand>
        <name>Zn(2+)</name>
        <dbReference type="ChEBI" id="CHEBI:29105"/>
    </ligand>
</feature>
<feature type="binding site" evidence="1">
    <location>
        <position position="27"/>
    </location>
    <ligand>
        <name>Zn(2+)</name>
        <dbReference type="ChEBI" id="CHEBI:29105"/>
    </ligand>
</feature>
<feature type="binding site" evidence="1">
    <location>
        <position position="31"/>
    </location>
    <ligand>
        <name>Zn(2+)</name>
        <dbReference type="ChEBI" id="CHEBI:29105"/>
    </ligand>
</feature>